<reference key="1">
    <citation type="journal article" date="2005" name="Genome Res.">
        <title>Comparative genome sequencing of Drosophila pseudoobscura: chromosomal, gene, and cis-element evolution.</title>
        <authorList>
            <person name="Richards S."/>
            <person name="Liu Y."/>
            <person name="Bettencourt B.R."/>
            <person name="Hradecky P."/>
            <person name="Letovsky S."/>
            <person name="Nielsen R."/>
            <person name="Thornton K."/>
            <person name="Hubisz M.J."/>
            <person name="Chen R."/>
            <person name="Meisel R.P."/>
            <person name="Couronne O."/>
            <person name="Hua S."/>
            <person name="Smith M.A."/>
            <person name="Zhang P."/>
            <person name="Liu J."/>
            <person name="Bussemaker H.J."/>
            <person name="van Batenburg M.F."/>
            <person name="Howells S.L."/>
            <person name="Scherer S.E."/>
            <person name="Sodergren E."/>
            <person name="Matthews B.B."/>
            <person name="Crosby M.A."/>
            <person name="Schroeder A.J."/>
            <person name="Ortiz-Barrientos D."/>
            <person name="Rives C.M."/>
            <person name="Metzker M.L."/>
            <person name="Muzny D.M."/>
            <person name="Scott G."/>
            <person name="Steffen D."/>
            <person name="Wheeler D.A."/>
            <person name="Worley K.C."/>
            <person name="Havlak P."/>
            <person name="Durbin K.J."/>
            <person name="Egan A."/>
            <person name="Gill R."/>
            <person name="Hume J."/>
            <person name="Morgan M.B."/>
            <person name="Miner G."/>
            <person name="Hamilton C."/>
            <person name="Huang Y."/>
            <person name="Waldron L."/>
            <person name="Verduzco D."/>
            <person name="Clerc-Blankenburg K.P."/>
            <person name="Dubchak I."/>
            <person name="Noor M.A.F."/>
            <person name="Anderson W."/>
            <person name="White K.P."/>
            <person name="Clark A.G."/>
            <person name="Schaeffer S.W."/>
            <person name="Gelbart W.M."/>
            <person name="Weinstock G.M."/>
            <person name="Gibbs R.A."/>
        </authorList>
    </citation>
    <scope>NUCLEOTIDE SEQUENCE [LARGE SCALE GENOMIC DNA]</scope>
    <source>
        <strain>MV2-25 / Tucson 14011-0121.94</strain>
    </source>
</reference>
<gene>
    <name evidence="1" type="primary">mEFG1</name>
    <name evidence="1" type="synonym">ico</name>
    <name type="ORF">GA18263</name>
</gene>
<evidence type="ECO:0000250" key="1">
    <source>
        <dbReference type="UniProtKB" id="Q9VM33"/>
    </source>
</evidence>
<evidence type="ECO:0000255" key="2">
    <source>
        <dbReference type="HAMAP-Rule" id="MF_03061"/>
    </source>
</evidence>
<evidence type="ECO:0000256" key="3">
    <source>
        <dbReference type="SAM" id="MobiDB-lite"/>
    </source>
</evidence>
<evidence type="ECO:0000305" key="4"/>
<comment type="function">
    <text evidence="2">Mitochondrial GTPase that catalyzes the GTP-dependent ribosomal translocation step during translation elongation. During this step, the ribosome changes from the pre-translocational (PRE) to the post-translocational (POST) state as the newly formed A-site-bound peptidyl-tRNA and P-site-bound deacylated tRNA move to the P and E sites, respectively. Catalyzes the coordinated movement of the two tRNA molecules, the mRNA and conformational changes in the ribosome. Essential during development as it acts as a retrograde signal from mitochondria to the nucleus to slow down cell proliferation if mitochondrial energy output is low (By similarity).</text>
</comment>
<comment type="pathway">
    <text evidence="2">Protein biosynthesis; polypeptide chain elongation.</text>
</comment>
<comment type="subcellular location">
    <subcellularLocation>
        <location evidence="2">Mitochondrion</location>
    </subcellularLocation>
</comment>
<comment type="miscellaneous">
    <text evidence="2">This protein may be expected to contain an N-terminal transit peptide but none has been predicted.</text>
</comment>
<comment type="similarity">
    <text evidence="4">Belongs to the TRAFAC class translation factor GTPase superfamily. Classic translation factor GTPase family. EF-G/EF-2 subfamily.</text>
</comment>
<dbReference type="EMBL" id="CH379060">
    <property type="protein sequence ID" value="EAL33465.1"/>
    <property type="molecule type" value="Genomic_DNA"/>
</dbReference>
<dbReference type="RefSeq" id="XP_001356402.1">
    <property type="nucleotide sequence ID" value="XM_001356366.3"/>
</dbReference>
<dbReference type="SMR" id="Q29N77"/>
<dbReference type="FunCoup" id="Q29N77">
    <property type="interactions" value="2211"/>
</dbReference>
<dbReference type="STRING" id="46245.Q29N77"/>
<dbReference type="EnsemblMetazoa" id="FBtr0281913">
    <property type="protein sequence ID" value="FBpp0280351"/>
    <property type="gene ID" value="FBgn0078269"/>
</dbReference>
<dbReference type="GeneID" id="4817299"/>
<dbReference type="KEGG" id="dpo:4817299"/>
<dbReference type="CTD" id="34004"/>
<dbReference type="eggNOG" id="KOG0465">
    <property type="taxonomic scope" value="Eukaryota"/>
</dbReference>
<dbReference type="HOGENOM" id="CLU_002794_4_0_1"/>
<dbReference type="InParanoid" id="Q29N77"/>
<dbReference type="OMA" id="GQFAKVQ"/>
<dbReference type="PhylomeDB" id="Q29N77"/>
<dbReference type="UniPathway" id="UPA00345"/>
<dbReference type="Proteomes" id="UP000001819">
    <property type="component" value="Chromosome 4"/>
</dbReference>
<dbReference type="Bgee" id="FBgn0078269">
    <property type="expression patterns" value="Expressed in female reproductive system and 2 other cell types or tissues"/>
</dbReference>
<dbReference type="GO" id="GO:0005739">
    <property type="term" value="C:mitochondrion"/>
    <property type="evidence" value="ECO:0007669"/>
    <property type="project" value="UniProtKB-SubCell"/>
</dbReference>
<dbReference type="GO" id="GO:0005525">
    <property type="term" value="F:GTP binding"/>
    <property type="evidence" value="ECO:0007669"/>
    <property type="project" value="UniProtKB-UniRule"/>
</dbReference>
<dbReference type="GO" id="GO:0003924">
    <property type="term" value="F:GTPase activity"/>
    <property type="evidence" value="ECO:0000250"/>
    <property type="project" value="UniProtKB"/>
</dbReference>
<dbReference type="GO" id="GO:0003746">
    <property type="term" value="F:translation elongation factor activity"/>
    <property type="evidence" value="ECO:0000250"/>
    <property type="project" value="UniProtKB"/>
</dbReference>
<dbReference type="GO" id="GO:0070125">
    <property type="term" value="P:mitochondrial translational elongation"/>
    <property type="evidence" value="ECO:0000250"/>
    <property type="project" value="UniProtKB"/>
</dbReference>
<dbReference type="CDD" id="cd01886">
    <property type="entry name" value="EF-G"/>
    <property type="match status" value="1"/>
</dbReference>
<dbReference type="CDD" id="cd16262">
    <property type="entry name" value="EFG_III"/>
    <property type="match status" value="1"/>
</dbReference>
<dbReference type="CDD" id="cd01434">
    <property type="entry name" value="EFG_mtEFG1_IV"/>
    <property type="match status" value="1"/>
</dbReference>
<dbReference type="CDD" id="cd04097">
    <property type="entry name" value="mtEFG1_C"/>
    <property type="match status" value="1"/>
</dbReference>
<dbReference type="CDD" id="cd04091">
    <property type="entry name" value="mtEFG1_II_like"/>
    <property type="match status" value="1"/>
</dbReference>
<dbReference type="FunFam" id="3.30.230.10:FF:000003">
    <property type="entry name" value="Elongation factor G"/>
    <property type="match status" value="1"/>
</dbReference>
<dbReference type="FunFam" id="3.30.70.240:FF:000001">
    <property type="entry name" value="Elongation factor G"/>
    <property type="match status" value="1"/>
</dbReference>
<dbReference type="FunFam" id="3.30.70.870:FF:000001">
    <property type="entry name" value="Elongation factor G"/>
    <property type="match status" value="1"/>
</dbReference>
<dbReference type="FunFam" id="2.40.30.10:FF:000022">
    <property type="entry name" value="Elongation factor G, mitochondrial"/>
    <property type="match status" value="1"/>
</dbReference>
<dbReference type="FunFam" id="3.40.50.300:FF:000539">
    <property type="entry name" value="Elongation factor G, mitochondrial"/>
    <property type="match status" value="1"/>
</dbReference>
<dbReference type="Gene3D" id="3.30.230.10">
    <property type="match status" value="1"/>
</dbReference>
<dbReference type="Gene3D" id="3.30.70.240">
    <property type="match status" value="1"/>
</dbReference>
<dbReference type="Gene3D" id="3.30.70.870">
    <property type="entry name" value="Elongation Factor G (Translational Gtpase), domain 3"/>
    <property type="match status" value="1"/>
</dbReference>
<dbReference type="Gene3D" id="3.40.50.300">
    <property type="entry name" value="P-loop containing nucleotide triphosphate hydrolases"/>
    <property type="match status" value="1"/>
</dbReference>
<dbReference type="Gene3D" id="2.40.30.10">
    <property type="entry name" value="Translation factors"/>
    <property type="match status" value="1"/>
</dbReference>
<dbReference type="HAMAP" id="MF_00054_B">
    <property type="entry name" value="EF_G_EF_2_B"/>
    <property type="match status" value="1"/>
</dbReference>
<dbReference type="InterPro" id="IPR041095">
    <property type="entry name" value="EFG_II"/>
</dbReference>
<dbReference type="InterPro" id="IPR009022">
    <property type="entry name" value="EFG_III"/>
</dbReference>
<dbReference type="InterPro" id="IPR035647">
    <property type="entry name" value="EFG_III/V"/>
</dbReference>
<dbReference type="InterPro" id="IPR047872">
    <property type="entry name" value="EFG_IV"/>
</dbReference>
<dbReference type="InterPro" id="IPR035649">
    <property type="entry name" value="EFG_V"/>
</dbReference>
<dbReference type="InterPro" id="IPR000640">
    <property type="entry name" value="EFG_V-like"/>
</dbReference>
<dbReference type="InterPro" id="IPR004161">
    <property type="entry name" value="EFTu-like_2"/>
</dbReference>
<dbReference type="InterPro" id="IPR031157">
    <property type="entry name" value="G_TR_CS"/>
</dbReference>
<dbReference type="InterPro" id="IPR027417">
    <property type="entry name" value="P-loop_NTPase"/>
</dbReference>
<dbReference type="InterPro" id="IPR020568">
    <property type="entry name" value="Ribosomal_Su5_D2-typ_SF"/>
</dbReference>
<dbReference type="InterPro" id="IPR014721">
    <property type="entry name" value="Ribsml_uS5_D2-typ_fold_subgr"/>
</dbReference>
<dbReference type="InterPro" id="IPR005225">
    <property type="entry name" value="Small_GTP-bd"/>
</dbReference>
<dbReference type="InterPro" id="IPR000795">
    <property type="entry name" value="T_Tr_GTP-bd_dom"/>
</dbReference>
<dbReference type="InterPro" id="IPR009000">
    <property type="entry name" value="Transl_B-barrel_sf"/>
</dbReference>
<dbReference type="InterPro" id="IPR004540">
    <property type="entry name" value="Transl_elong_EFG/EF2"/>
</dbReference>
<dbReference type="InterPro" id="IPR005517">
    <property type="entry name" value="Transl_elong_EFG/EF2_IV"/>
</dbReference>
<dbReference type="NCBIfam" id="TIGR00484">
    <property type="entry name" value="EF-G"/>
    <property type="match status" value="1"/>
</dbReference>
<dbReference type="NCBIfam" id="NF009381">
    <property type="entry name" value="PRK12740.1-5"/>
    <property type="match status" value="1"/>
</dbReference>
<dbReference type="NCBIfam" id="TIGR00231">
    <property type="entry name" value="small_GTP"/>
    <property type="match status" value="1"/>
</dbReference>
<dbReference type="PANTHER" id="PTHR43636">
    <property type="entry name" value="ELONGATION FACTOR G, MITOCHONDRIAL"/>
    <property type="match status" value="1"/>
</dbReference>
<dbReference type="PANTHER" id="PTHR43636:SF2">
    <property type="entry name" value="ELONGATION FACTOR G, MITOCHONDRIAL"/>
    <property type="match status" value="1"/>
</dbReference>
<dbReference type="Pfam" id="PF00679">
    <property type="entry name" value="EFG_C"/>
    <property type="match status" value="1"/>
</dbReference>
<dbReference type="Pfam" id="PF14492">
    <property type="entry name" value="EFG_III"/>
    <property type="match status" value="1"/>
</dbReference>
<dbReference type="Pfam" id="PF03764">
    <property type="entry name" value="EFG_IV"/>
    <property type="match status" value="1"/>
</dbReference>
<dbReference type="Pfam" id="PF00009">
    <property type="entry name" value="GTP_EFTU"/>
    <property type="match status" value="1"/>
</dbReference>
<dbReference type="Pfam" id="PF03144">
    <property type="entry name" value="GTP_EFTU_D2"/>
    <property type="match status" value="1"/>
</dbReference>
<dbReference type="PRINTS" id="PR00315">
    <property type="entry name" value="ELONGATNFCT"/>
</dbReference>
<dbReference type="SMART" id="SM00838">
    <property type="entry name" value="EFG_C"/>
    <property type="match status" value="1"/>
</dbReference>
<dbReference type="SMART" id="SM00889">
    <property type="entry name" value="EFG_IV"/>
    <property type="match status" value="1"/>
</dbReference>
<dbReference type="SUPFAM" id="SSF54980">
    <property type="entry name" value="EF-G C-terminal domain-like"/>
    <property type="match status" value="2"/>
</dbReference>
<dbReference type="SUPFAM" id="SSF52540">
    <property type="entry name" value="P-loop containing nucleoside triphosphate hydrolases"/>
    <property type="match status" value="1"/>
</dbReference>
<dbReference type="SUPFAM" id="SSF54211">
    <property type="entry name" value="Ribosomal protein S5 domain 2-like"/>
    <property type="match status" value="1"/>
</dbReference>
<dbReference type="SUPFAM" id="SSF50447">
    <property type="entry name" value="Translation proteins"/>
    <property type="match status" value="1"/>
</dbReference>
<dbReference type="PROSITE" id="PS00301">
    <property type="entry name" value="G_TR_1"/>
    <property type="match status" value="1"/>
</dbReference>
<dbReference type="PROSITE" id="PS51722">
    <property type="entry name" value="G_TR_2"/>
    <property type="match status" value="1"/>
</dbReference>
<organism>
    <name type="scientific">Drosophila pseudoobscura pseudoobscura</name>
    <name type="common">Fruit fly</name>
    <dbReference type="NCBI Taxonomy" id="46245"/>
    <lineage>
        <taxon>Eukaryota</taxon>
        <taxon>Metazoa</taxon>
        <taxon>Ecdysozoa</taxon>
        <taxon>Arthropoda</taxon>
        <taxon>Hexapoda</taxon>
        <taxon>Insecta</taxon>
        <taxon>Pterygota</taxon>
        <taxon>Neoptera</taxon>
        <taxon>Endopterygota</taxon>
        <taxon>Diptera</taxon>
        <taxon>Brachycera</taxon>
        <taxon>Muscomorpha</taxon>
        <taxon>Ephydroidea</taxon>
        <taxon>Drosophilidae</taxon>
        <taxon>Drosophila</taxon>
        <taxon>Sophophora</taxon>
    </lineage>
</organism>
<proteinExistence type="inferred from homology"/>
<feature type="chain" id="PRO_0000385549" description="Elongation factor G, mitochondrial">
    <location>
        <begin position="1"/>
        <end position="744"/>
    </location>
</feature>
<feature type="domain" description="tr-type G">
    <location>
        <begin position="39"/>
        <end position="316"/>
    </location>
</feature>
<feature type="region of interest" description="Disordered" evidence="3">
    <location>
        <begin position="725"/>
        <end position="744"/>
    </location>
</feature>
<feature type="compositionally biased region" description="Polar residues" evidence="3">
    <location>
        <begin position="725"/>
        <end position="735"/>
    </location>
</feature>
<feature type="binding site" evidence="2">
    <location>
        <begin position="48"/>
        <end position="55"/>
    </location>
    <ligand>
        <name>GTP</name>
        <dbReference type="ChEBI" id="CHEBI:37565"/>
    </ligand>
</feature>
<feature type="binding site" evidence="2">
    <location>
        <begin position="115"/>
        <end position="119"/>
    </location>
    <ligand>
        <name>GTP</name>
        <dbReference type="ChEBI" id="CHEBI:37565"/>
    </ligand>
</feature>
<feature type="binding site" evidence="2">
    <location>
        <begin position="169"/>
        <end position="172"/>
    </location>
    <ligand>
        <name>GTP</name>
        <dbReference type="ChEBI" id="CHEBI:37565"/>
    </ligand>
</feature>
<accession>Q29N77</accession>
<keyword id="KW-0251">Elongation factor</keyword>
<keyword id="KW-0342">GTP-binding</keyword>
<keyword id="KW-0496">Mitochondrion</keyword>
<keyword id="KW-0547">Nucleotide-binding</keyword>
<keyword id="KW-0648">Protein biosynthesis</keyword>
<keyword id="KW-1185">Reference proteome</keyword>
<sequence length="744" mass="83536">MSLITRVLQGNLTRKNALQTLTRCGYSSHAKFAEHRPIEKIRNIGISAHIDSGKTTLTERILFYTGRIAEMHEVRGKDNVGATMDSMELERQRGITIQSAATYTMWKDTNVNIIDTPGHVDFTVEVERALRVLDGAVLVLCAVGGVQSQTLTVNRQMKRYNVPCLAFINKLDRLGSNPYRVLSQMRSKMNHNAAFIQLPIGVESNCKGLVDLVREQAIYFEGENGMDVRLDEIPQDMRVESQERRQELIEHLSNADETFGEFFLEEKPFSEADLRAALRRTCINRTFTPVLVGTALKNKGVQPLLDAVIDYLPNPGEVENLGFIEREGKDPEKIVLNPARDGKDPFVGLAFKLEAGRFGQLTYLRCYQGVLRKGDNIFNARTNKKVRIARLVRLHSSQMEDVNEVYAGDIFALFGVDCASGDTFTTNPKNNLAMESIFVPEPVVSMAIKPNNTKDRDNFSKAIARFTKEDPTFHFFFDNDVKETLVSGMGELHLEIYAQRMEREYGCPVTLGKPKVAFRETLVGPCEFDYLHKKQSGGSGQYARIIGVMEPLPPNQNTLLEFVDETVGTNVPKQFVPGVEKGYREMAERGMLSGHRLSGIKFRLQDGGHHIVDSSELAFMLAAHGAIKEVFQNGSWQILEPIMMVEVTAPEEFQGAVMGHLSKRHGIITGTEGTEGWFTVYAEVPLNDMFGYAGELRSSTQGKGEFTMEYSRYSPCLPDVQDQIVRQYQETQGASQPDKKKKKN</sequence>
<protein>
    <recommendedName>
        <fullName evidence="2">Elongation factor G, mitochondrial</fullName>
        <shortName evidence="2">EF-Gmt</shortName>
    </recommendedName>
    <alternativeName>
        <fullName evidence="2">Elongation factor G 1, mitochondrial</fullName>
        <shortName evidence="2">mEF-G 1</shortName>
    </alternativeName>
    <alternativeName>
        <fullName evidence="2">Elongation factor G1</fullName>
    </alternativeName>
</protein>
<name>EFGM_DROPS</name>